<gene>
    <name type="primary">FBL12</name>
    <name type="ordered locus">At3g07550</name>
    <name type="ORF">F21O3.26</name>
</gene>
<organism>
    <name type="scientific">Arabidopsis thaliana</name>
    <name type="common">Mouse-ear cress</name>
    <dbReference type="NCBI Taxonomy" id="3702"/>
    <lineage>
        <taxon>Eukaryota</taxon>
        <taxon>Viridiplantae</taxon>
        <taxon>Streptophyta</taxon>
        <taxon>Embryophyta</taxon>
        <taxon>Tracheophyta</taxon>
        <taxon>Spermatophyta</taxon>
        <taxon>Magnoliopsida</taxon>
        <taxon>eudicotyledons</taxon>
        <taxon>Gunneridae</taxon>
        <taxon>Pentapetalae</taxon>
        <taxon>rosids</taxon>
        <taxon>malvids</taxon>
        <taxon>Brassicales</taxon>
        <taxon>Brassicaceae</taxon>
        <taxon>Camelineae</taxon>
        <taxon>Arabidopsis</taxon>
    </lineage>
</organism>
<protein>
    <recommendedName>
        <fullName>F-box/LRR-repeat protein 12</fullName>
    </recommendedName>
</protein>
<dbReference type="EMBL" id="AC009853">
    <property type="protein sequence ID" value="AAF02159.1"/>
    <property type="molecule type" value="Genomic_DNA"/>
</dbReference>
<dbReference type="EMBL" id="CP002686">
    <property type="protein sequence ID" value="AEE74559.1"/>
    <property type="molecule type" value="Genomic_DNA"/>
</dbReference>
<dbReference type="EMBL" id="CP002686">
    <property type="protein sequence ID" value="AEE74560.1"/>
    <property type="molecule type" value="Genomic_DNA"/>
</dbReference>
<dbReference type="EMBL" id="AK118929">
    <property type="protein sequence ID" value="BAC43510.1"/>
    <property type="molecule type" value="mRNA"/>
</dbReference>
<dbReference type="EMBL" id="BT008530">
    <property type="protein sequence ID" value="AAP40357.1"/>
    <property type="molecule type" value="mRNA"/>
</dbReference>
<dbReference type="RefSeq" id="NP_566312.1">
    <property type="nucleotide sequence ID" value="NM_111633.4"/>
</dbReference>
<dbReference type="RefSeq" id="NP_850534.1">
    <property type="nucleotide sequence ID" value="NM_180203.3"/>
</dbReference>
<dbReference type="SMR" id="Q9SRR1"/>
<dbReference type="BioGRID" id="5279">
    <property type="interactions" value="1"/>
</dbReference>
<dbReference type="FunCoup" id="Q9SRR1">
    <property type="interactions" value="1104"/>
</dbReference>
<dbReference type="IntAct" id="Q9SRR1">
    <property type="interactions" value="1"/>
</dbReference>
<dbReference type="STRING" id="3702.Q9SRR1"/>
<dbReference type="PaxDb" id="3702-AT3G07550.1"/>
<dbReference type="ProteomicsDB" id="230696"/>
<dbReference type="EnsemblPlants" id="AT3G07550.1">
    <property type="protein sequence ID" value="AT3G07550.1"/>
    <property type="gene ID" value="AT3G07550"/>
</dbReference>
<dbReference type="EnsemblPlants" id="AT3G07550.2">
    <property type="protein sequence ID" value="AT3G07550.2"/>
    <property type="gene ID" value="AT3G07550"/>
</dbReference>
<dbReference type="GeneID" id="819944"/>
<dbReference type="Gramene" id="AT3G07550.1">
    <property type="protein sequence ID" value="AT3G07550.1"/>
    <property type="gene ID" value="AT3G07550"/>
</dbReference>
<dbReference type="Gramene" id="AT3G07550.2">
    <property type="protein sequence ID" value="AT3G07550.2"/>
    <property type="gene ID" value="AT3G07550"/>
</dbReference>
<dbReference type="KEGG" id="ath:AT3G07550"/>
<dbReference type="Araport" id="AT3G07550"/>
<dbReference type="TAIR" id="AT3G07550"/>
<dbReference type="eggNOG" id="KOG1947">
    <property type="taxonomic scope" value="Eukaryota"/>
</dbReference>
<dbReference type="HOGENOM" id="CLU_016072_0_0_1"/>
<dbReference type="InParanoid" id="Q9SRR1"/>
<dbReference type="OMA" id="MERETMD"/>
<dbReference type="OrthoDB" id="550575at2759"/>
<dbReference type="PhylomeDB" id="Q9SRR1"/>
<dbReference type="PRO" id="PR:Q9SRR1"/>
<dbReference type="Proteomes" id="UP000006548">
    <property type="component" value="Chromosome 3"/>
</dbReference>
<dbReference type="ExpressionAtlas" id="Q9SRR1">
    <property type="expression patterns" value="baseline and differential"/>
</dbReference>
<dbReference type="CDD" id="cd22159">
    <property type="entry name" value="F-box_AtTIR1-like"/>
    <property type="match status" value="1"/>
</dbReference>
<dbReference type="FunFam" id="3.80.10.10:FF:001967">
    <property type="entry name" value="F-box/LRR-repeat protein 12"/>
    <property type="match status" value="1"/>
</dbReference>
<dbReference type="Gene3D" id="3.80.10.10">
    <property type="entry name" value="Ribonuclease Inhibitor"/>
    <property type="match status" value="2"/>
</dbReference>
<dbReference type="InterPro" id="IPR036047">
    <property type="entry name" value="F-box-like_dom_sf"/>
</dbReference>
<dbReference type="InterPro" id="IPR001611">
    <property type="entry name" value="Leu-rich_rpt"/>
</dbReference>
<dbReference type="InterPro" id="IPR006553">
    <property type="entry name" value="Leu-rich_rpt_Cys-con_subtyp"/>
</dbReference>
<dbReference type="InterPro" id="IPR032675">
    <property type="entry name" value="LRR_dom_sf"/>
</dbReference>
<dbReference type="PANTHER" id="PTHR13318">
    <property type="entry name" value="PARTNER OF PAIRED, ISOFORM B-RELATED"/>
    <property type="match status" value="1"/>
</dbReference>
<dbReference type="Pfam" id="PF13516">
    <property type="entry name" value="LRR_6"/>
    <property type="match status" value="2"/>
</dbReference>
<dbReference type="SMART" id="SM00367">
    <property type="entry name" value="LRR_CC"/>
    <property type="match status" value="6"/>
</dbReference>
<dbReference type="SUPFAM" id="SSF81383">
    <property type="entry name" value="F-box domain"/>
    <property type="match status" value="1"/>
</dbReference>
<dbReference type="SUPFAM" id="SSF52047">
    <property type="entry name" value="RNI-like"/>
    <property type="match status" value="1"/>
</dbReference>
<accession>Q9SRR1</accession>
<feature type="chain" id="PRO_0000272252" description="F-box/LRR-repeat protein 12">
    <location>
        <begin position="1"/>
        <end position="395"/>
    </location>
</feature>
<feature type="domain" description="F-box">
    <location>
        <begin position="13"/>
        <end position="61"/>
    </location>
</feature>
<feature type="repeat" description="LRR 1">
    <location>
        <begin position="75"/>
        <end position="100"/>
    </location>
</feature>
<feature type="repeat" description="LRR 2">
    <location>
        <begin position="101"/>
        <end position="126"/>
    </location>
</feature>
<feature type="repeat" description="LRR 3">
    <location>
        <begin position="127"/>
        <end position="152"/>
    </location>
</feature>
<feature type="repeat" description="LRR 4">
    <location>
        <begin position="154"/>
        <end position="177"/>
    </location>
</feature>
<feature type="repeat" description="LRR 5">
    <location>
        <begin position="178"/>
        <end position="203"/>
    </location>
</feature>
<feature type="repeat" description="LRR 6">
    <location>
        <begin position="226"/>
        <end position="250"/>
    </location>
</feature>
<feature type="repeat" description="LRR 7">
    <location>
        <begin position="252"/>
        <end position="278"/>
    </location>
</feature>
<feature type="repeat" description="LRR 8">
    <location>
        <begin position="279"/>
        <end position="304"/>
    </location>
</feature>
<feature type="repeat" description="LRR 9">
    <location>
        <begin position="305"/>
        <end position="330"/>
    </location>
</feature>
<feature type="repeat" description="LRR 10">
    <location>
        <begin position="331"/>
        <end position="356"/>
    </location>
</feature>
<name>FBL12_ARATH</name>
<sequence length="395" mass="43677">MEDVSESDNNVETSIIHLPDDCLSFIFQRLDSVADHDSFGLTCHRWLNIQNISRRSLQFQCSFSVLNPSSLSQTNPDVSSHHLHRLLTRFQWLEHLSLSGCTVLNDSSLDSLRYPGARLHTLYLDCCFGISDDGISTIASFCPNLSVVSLYRCNISDIGLETLARASLSLKCVNLSYCPLVSDFGIKALSQACLQLESVKISNCKSITGVGFSGCSPTLGYVDADSCQLEPKGITGIISGGGIEFLNISGVSCYIRKDGLVPIGSGIASKLRILNLRMCRTVGDESIEAIAKGCPLLQEWNLALCHEVKISGWEAVGKWCRNLKKLHVNRCRNLCDQGLLALRCGCMNLQILYMNGNARLTPTAIEMFRLHRADITLRTEEMMVIGPDWRLYAQE</sequence>
<keyword id="KW-0433">Leucine-rich repeat</keyword>
<keyword id="KW-1185">Reference proteome</keyword>
<keyword id="KW-0677">Repeat</keyword>
<proteinExistence type="evidence at transcript level"/>
<reference key="1">
    <citation type="journal article" date="2000" name="Nature">
        <title>Sequence and analysis of chromosome 3 of the plant Arabidopsis thaliana.</title>
        <authorList>
            <person name="Salanoubat M."/>
            <person name="Lemcke K."/>
            <person name="Rieger M."/>
            <person name="Ansorge W."/>
            <person name="Unseld M."/>
            <person name="Fartmann B."/>
            <person name="Valle G."/>
            <person name="Bloecker H."/>
            <person name="Perez-Alonso M."/>
            <person name="Obermaier B."/>
            <person name="Delseny M."/>
            <person name="Boutry M."/>
            <person name="Grivell L.A."/>
            <person name="Mache R."/>
            <person name="Puigdomenech P."/>
            <person name="De Simone V."/>
            <person name="Choisne N."/>
            <person name="Artiguenave F."/>
            <person name="Robert C."/>
            <person name="Brottier P."/>
            <person name="Wincker P."/>
            <person name="Cattolico L."/>
            <person name="Weissenbach J."/>
            <person name="Saurin W."/>
            <person name="Quetier F."/>
            <person name="Schaefer M."/>
            <person name="Mueller-Auer S."/>
            <person name="Gabel C."/>
            <person name="Fuchs M."/>
            <person name="Benes V."/>
            <person name="Wurmbach E."/>
            <person name="Drzonek H."/>
            <person name="Erfle H."/>
            <person name="Jordan N."/>
            <person name="Bangert S."/>
            <person name="Wiedelmann R."/>
            <person name="Kranz H."/>
            <person name="Voss H."/>
            <person name="Holland R."/>
            <person name="Brandt P."/>
            <person name="Nyakatura G."/>
            <person name="Vezzi A."/>
            <person name="D'Angelo M."/>
            <person name="Pallavicini A."/>
            <person name="Toppo S."/>
            <person name="Simionati B."/>
            <person name="Conrad A."/>
            <person name="Hornischer K."/>
            <person name="Kauer G."/>
            <person name="Loehnert T.-H."/>
            <person name="Nordsiek G."/>
            <person name="Reichelt J."/>
            <person name="Scharfe M."/>
            <person name="Schoen O."/>
            <person name="Bargues M."/>
            <person name="Terol J."/>
            <person name="Climent J."/>
            <person name="Navarro P."/>
            <person name="Collado C."/>
            <person name="Perez-Perez A."/>
            <person name="Ottenwaelder B."/>
            <person name="Duchemin D."/>
            <person name="Cooke R."/>
            <person name="Laudie M."/>
            <person name="Berger-Llauro C."/>
            <person name="Purnelle B."/>
            <person name="Masuy D."/>
            <person name="de Haan M."/>
            <person name="Maarse A.C."/>
            <person name="Alcaraz J.-P."/>
            <person name="Cottet A."/>
            <person name="Casacuberta E."/>
            <person name="Monfort A."/>
            <person name="Argiriou A."/>
            <person name="Flores M."/>
            <person name="Liguori R."/>
            <person name="Vitale D."/>
            <person name="Mannhaupt G."/>
            <person name="Haase D."/>
            <person name="Schoof H."/>
            <person name="Rudd S."/>
            <person name="Zaccaria P."/>
            <person name="Mewes H.-W."/>
            <person name="Mayer K.F.X."/>
            <person name="Kaul S."/>
            <person name="Town C.D."/>
            <person name="Koo H.L."/>
            <person name="Tallon L.J."/>
            <person name="Jenkins J."/>
            <person name="Rooney T."/>
            <person name="Rizzo M."/>
            <person name="Walts A."/>
            <person name="Utterback T."/>
            <person name="Fujii C.Y."/>
            <person name="Shea T.P."/>
            <person name="Creasy T.H."/>
            <person name="Haas B."/>
            <person name="Maiti R."/>
            <person name="Wu D."/>
            <person name="Peterson J."/>
            <person name="Van Aken S."/>
            <person name="Pai G."/>
            <person name="Militscher J."/>
            <person name="Sellers P."/>
            <person name="Gill J.E."/>
            <person name="Feldblyum T.V."/>
            <person name="Preuss D."/>
            <person name="Lin X."/>
            <person name="Nierman W.C."/>
            <person name="Salzberg S.L."/>
            <person name="White O."/>
            <person name="Venter J.C."/>
            <person name="Fraser C.M."/>
            <person name="Kaneko T."/>
            <person name="Nakamura Y."/>
            <person name="Sato S."/>
            <person name="Kato T."/>
            <person name="Asamizu E."/>
            <person name="Sasamoto S."/>
            <person name="Kimura T."/>
            <person name="Idesawa K."/>
            <person name="Kawashima K."/>
            <person name="Kishida Y."/>
            <person name="Kiyokawa C."/>
            <person name="Kohara M."/>
            <person name="Matsumoto M."/>
            <person name="Matsuno A."/>
            <person name="Muraki A."/>
            <person name="Nakayama S."/>
            <person name="Nakazaki N."/>
            <person name="Shinpo S."/>
            <person name="Takeuchi C."/>
            <person name="Wada T."/>
            <person name="Watanabe A."/>
            <person name="Yamada M."/>
            <person name="Yasuda M."/>
            <person name="Tabata S."/>
        </authorList>
    </citation>
    <scope>NUCLEOTIDE SEQUENCE [LARGE SCALE GENOMIC DNA]</scope>
    <source>
        <strain>cv. Columbia</strain>
    </source>
</reference>
<reference key="2">
    <citation type="journal article" date="2017" name="Plant J.">
        <title>Araport11: a complete reannotation of the Arabidopsis thaliana reference genome.</title>
        <authorList>
            <person name="Cheng C.Y."/>
            <person name="Krishnakumar V."/>
            <person name="Chan A.P."/>
            <person name="Thibaud-Nissen F."/>
            <person name="Schobel S."/>
            <person name="Town C.D."/>
        </authorList>
    </citation>
    <scope>GENOME REANNOTATION</scope>
    <source>
        <strain>cv. Columbia</strain>
    </source>
</reference>
<reference key="3">
    <citation type="journal article" date="2002" name="Science">
        <title>Functional annotation of a full-length Arabidopsis cDNA collection.</title>
        <authorList>
            <person name="Seki M."/>
            <person name="Narusaka M."/>
            <person name="Kamiya A."/>
            <person name="Ishida J."/>
            <person name="Satou M."/>
            <person name="Sakurai T."/>
            <person name="Nakajima M."/>
            <person name="Enju A."/>
            <person name="Akiyama K."/>
            <person name="Oono Y."/>
            <person name="Muramatsu M."/>
            <person name="Hayashizaki Y."/>
            <person name="Kawai J."/>
            <person name="Carninci P."/>
            <person name="Itoh M."/>
            <person name="Ishii Y."/>
            <person name="Arakawa T."/>
            <person name="Shibata K."/>
            <person name="Shinagawa A."/>
            <person name="Shinozaki K."/>
        </authorList>
    </citation>
    <scope>NUCLEOTIDE SEQUENCE [LARGE SCALE MRNA]</scope>
    <source>
        <strain>cv. Columbia</strain>
    </source>
</reference>
<reference key="4">
    <citation type="journal article" date="2003" name="Science">
        <title>Empirical analysis of transcriptional activity in the Arabidopsis genome.</title>
        <authorList>
            <person name="Yamada K."/>
            <person name="Lim J."/>
            <person name="Dale J.M."/>
            <person name="Chen H."/>
            <person name="Shinn P."/>
            <person name="Palm C.J."/>
            <person name="Southwick A.M."/>
            <person name="Wu H.C."/>
            <person name="Kim C.J."/>
            <person name="Nguyen M."/>
            <person name="Pham P.K."/>
            <person name="Cheuk R.F."/>
            <person name="Karlin-Newmann G."/>
            <person name="Liu S.X."/>
            <person name="Lam B."/>
            <person name="Sakano H."/>
            <person name="Wu T."/>
            <person name="Yu G."/>
            <person name="Miranda M."/>
            <person name="Quach H.L."/>
            <person name="Tripp M."/>
            <person name="Chang C.H."/>
            <person name="Lee J.M."/>
            <person name="Toriumi M.J."/>
            <person name="Chan M.M."/>
            <person name="Tang C.C."/>
            <person name="Onodera C.S."/>
            <person name="Deng J.M."/>
            <person name="Akiyama K."/>
            <person name="Ansari Y."/>
            <person name="Arakawa T."/>
            <person name="Banh J."/>
            <person name="Banno F."/>
            <person name="Bowser L."/>
            <person name="Brooks S.Y."/>
            <person name="Carninci P."/>
            <person name="Chao Q."/>
            <person name="Choy N."/>
            <person name="Enju A."/>
            <person name="Goldsmith A.D."/>
            <person name="Gurjal M."/>
            <person name="Hansen N.F."/>
            <person name="Hayashizaki Y."/>
            <person name="Johnson-Hopson C."/>
            <person name="Hsuan V.W."/>
            <person name="Iida K."/>
            <person name="Karnes M."/>
            <person name="Khan S."/>
            <person name="Koesema E."/>
            <person name="Ishida J."/>
            <person name="Jiang P.X."/>
            <person name="Jones T."/>
            <person name="Kawai J."/>
            <person name="Kamiya A."/>
            <person name="Meyers C."/>
            <person name="Nakajima M."/>
            <person name="Narusaka M."/>
            <person name="Seki M."/>
            <person name="Sakurai T."/>
            <person name="Satou M."/>
            <person name="Tamse R."/>
            <person name="Vaysberg M."/>
            <person name="Wallender E.K."/>
            <person name="Wong C."/>
            <person name="Yamamura Y."/>
            <person name="Yuan S."/>
            <person name="Shinozaki K."/>
            <person name="Davis R.W."/>
            <person name="Theologis A."/>
            <person name="Ecker J.R."/>
        </authorList>
    </citation>
    <scope>NUCLEOTIDE SEQUENCE [LARGE SCALE MRNA]</scope>
    <source>
        <strain>cv. Columbia</strain>
    </source>
</reference>
<reference key="5">
    <citation type="journal article" date="2000" name="Trends Plant Sci.">
        <title>F-box proteins in Arabidopsis.</title>
        <authorList>
            <person name="Xiao W."/>
            <person name="Jang J.-C."/>
        </authorList>
    </citation>
    <scope>GENE FAMILY</scope>
    <scope>NOMENCLATURE</scope>
</reference>